<organism>
    <name type="scientific">Salmonella paratyphi A (strain ATCC 9150 / SARB42)</name>
    <dbReference type="NCBI Taxonomy" id="295319"/>
    <lineage>
        <taxon>Bacteria</taxon>
        <taxon>Pseudomonadati</taxon>
        <taxon>Pseudomonadota</taxon>
        <taxon>Gammaproteobacteria</taxon>
        <taxon>Enterobacterales</taxon>
        <taxon>Enterobacteriaceae</taxon>
        <taxon>Salmonella</taxon>
    </lineage>
</organism>
<feature type="chain" id="PRO_0000344718" description="Large ribosomal subunit protein bL36B">
    <location>
        <begin position="1"/>
        <end position="46"/>
    </location>
</feature>
<accession>Q5PFM0</accession>
<name>RL362_SALPA</name>
<comment type="similarity">
    <text evidence="1">Belongs to the bacterial ribosomal protein bL36 family.</text>
</comment>
<protein>
    <recommendedName>
        <fullName evidence="1">Large ribosomal subunit protein bL36B</fullName>
    </recommendedName>
    <alternativeName>
        <fullName evidence="2">50S ribosomal protein L36 2</fullName>
    </alternativeName>
</protein>
<dbReference type="EMBL" id="CP000026">
    <property type="protein sequence ID" value="AAV78138.1"/>
    <property type="molecule type" value="Genomic_DNA"/>
</dbReference>
<dbReference type="SMR" id="Q5PFM0"/>
<dbReference type="KEGG" id="spt:SPA2252"/>
<dbReference type="HOGENOM" id="CLU_135723_3_1_6"/>
<dbReference type="Proteomes" id="UP000008185">
    <property type="component" value="Chromosome"/>
</dbReference>
<dbReference type="GO" id="GO:1990904">
    <property type="term" value="C:ribonucleoprotein complex"/>
    <property type="evidence" value="ECO:0007669"/>
    <property type="project" value="UniProtKB-KW"/>
</dbReference>
<dbReference type="GO" id="GO:0005840">
    <property type="term" value="C:ribosome"/>
    <property type="evidence" value="ECO:0007669"/>
    <property type="project" value="UniProtKB-KW"/>
</dbReference>
<dbReference type="GO" id="GO:0003735">
    <property type="term" value="F:structural constituent of ribosome"/>
    <property type="evidence" value="ECO:0007669"/>
    <property type="project" value="InterPro"/>
</dbReference>
<dbReference type="GO" id="GO:0006412">
    <property type="term" value="P:translation"/>
    <property type="evidence" value="ECO:0007669"/>
    <property type="project" value="UniProtKB-UniRule"/>
</dbReference>
<dbReference type="HAMAP" id="MF_00251">
    <property type="entry name" value="Ribosomal_bL36"/>
    <property type="match status" value="1"/>
</dbReference>
<dbReference type="InterPro" id="IPR000473">
    <property type="entry name" value="Ribosomal_bL36"/>
</dbReference>
<dbReference type="InterPro" id="IPR035977">
    <property type="entry name" value="Ribosomal_bL36_sp"/>
</dbReference>
<dbReference type="InterPro" id="IPR047621">
    <property type="entry name" value="Ribosomal_L36_bact"/>
</dbReference>
<dbReference type="NCBIfam" id="NF002021">
    <property type="entry name" value="PRK00831.1"/>
    <property type="match status" value="1"/>
</dbReference>
<dbReference type="NCBIfam" id="TIGR01022">
    <property type="entry name" value="rpmJ_bact"/>
    <property type="match status" value="1"/>
</dbReference>
<dbReference type="PANTHER" id="PTHR47781">
    <property type="entry name" value="50S RIBOSOMAL PROTEIN L36 2"/>
    <property type="match status" value="1"/>
</dbReference>
<dbReference type="PANTHER" id="PTHR47781:SF1">
    <property type="entry name" value="LARGE RIBOSOMAL SUBUNIT PROTEIN BL36B"/>
    <property type="match status" value="1"/>
</dbReference>
<dbReference type="Pfam" id="PF00444">
    <property type="entry name" value="Ribosomal_L36"/>
    <property type="match status" value="1"/>
</dbReference>
<dbReference type="SUPFAM" id="SSF57840">
    <property type="entry name" value="Ribosomal protein L36"/>
    <property type="match status" value="1"/>
</dbReference>
<dbReference type="PROSITE" id="PS00828">
    <property type="entry name" value="RIBOSOMAL_L36"/>
    <property type="match status" value="1"/>
</dbReference>
<gene>
    <name evidence="1" type="primary">rpmJ2</name>
    <name type="ordered locus">SPA2252</name>
</gene>
<sequence length="46" mass="5521">MQVLNSLRNAKQRHPDCQIVKRKGRLYVICKTNPRFKAVQGRKKRR</sequence>
<keyword id="KW-0687">Ribonucleoprotein</keyword>
<keyword id="KW-0689">Ribosomal protein</keyword>
<proteinExistence type="inferred from homology"/>
<evidence type="ECO:0000255" key="1">
    <source>
        <dbReference type="HAMAP-Rule" id="MF_00251"/>
    </source>
</evidence>
<evidence type="ECO:0000305" key="2"/>
<reference key="1">
    <citation type="journal article" date="2004" name="Nat. Genet.">
        <title>Comparison of genome degradation in Paratyphi A and Typhi, human-restricted serovars of Salmonella enterica that cause typhoid.</title>
        <authorList>
            <person name="McClelland M."/>
            <person name="Sanderson K.E."/>
            <person name="Clifton S.W."/>
            <person name="Latreille P."/>
            <person name="Porwollik S."/>
            <person name="Sabo A."/>
            <person name="Meyer R."/>
            <person name="Bieri T."/>
            <person name="Ozersky P."/>
            <person name="McLellan M."/>
            <person name="Harkins C.R."/>
            <person name="Wang C."/>
            <person name="Nguyen C."/>
            <person name="Berghoff A."/>
            <person name="Elliott G."/>
            <person name="Kohlberg S."/>
            <person name="Strong C."/>
            <person name="Du F."/>
            <person name="Carter J."/>
            <person name="Kremizki C."/>
            <person name="Layman D."/>
            <person name="Leonard S."/>
            <person name="Sun H."/>
            <person name="Fulton L."/>
            <person name="Nash W."/>
            <person name="Miner T."/>
            <person name="Minx P."/>
            <person name="Delehaunty K."/>
            <person name="Fronick C."/>
            <person name="Magrini V."/>
            <person name="Nhan M."/>
            <person name="Warren W."/>
            <person name="Florea L."/>
            <person name="Spieth J."/>
            <person name="Wilson R.K."/>
        </authorList>
    </citation>
    <scope>NUCLEOTIDE SEQUENCE [LARGE SCALE GENOMIC DNA]</scope>
    <source>
        <strain>ATCC 9150 / SARB42</strain>
    </source>
</reference>